<name>RBSD_BACC0</name>
<evidence type="ECO:0000255" key="1">
    <source>
        <dbReference type="HAMAP-Rule" id="MF_01661"/>
    </source>
</evidence>
<comment type="function">
    <text evidence="1">Catalyzes the interconversion of beta-pyran and beta-furan forms of D-ribose.</text>
</comment>
<comment type="catalytic activity">
    <reaction evidence="1">
        <text>beta-D-ribopyranose = beta-D-ribofuranose</text>
        <dbReference type="Rhea" id="RHEA:25432"/>
        <dbReference type="ChEBI" id="CHEBI:27476"/>
        <dbReference type="ChEBI" id="CHEBI:47002"/>
        <dbReference type="EC" id="5.4.99.62"/>
    </reaction>
</comment>
<comment type="pathway">
    <text evidence="1">Carbohydrate metabolism; D-ribose degradation; D-ribose 5-phosphate from beta-D-ribopyranose: step 1/2.</text>
</comment>
<comment type="subunit">
    <text evidence="1">Homodecamer.</text>
</comment>
<comment type="subcellular location">
    <subcellularLocation>
        <location evidence="1">Cytoplasm</location>
    </subcellularLocation>
</comment>
<comment type="similarity">
    <text evidence="1">Belongs to the RbsD / FucU family. RbsD subfamily.</text>
</comment>
<gene>
    <name evidence="1" type="primary">rbsD</name>
    <name type="ordered locus">BCAH820_0723</name>
</gene>
<feature type="chain" id="PRO_1000187130" description="D-ribose pyranase">
    <location>
        <begin position="1"/>
        <end position="131"/>
    </location>
</feature>
<feature type="active site" description="Proton donor" evidence="1">
    <location>
        <position position="20"/>
    </location>
</feature>
<feature type="binding site" evidence="1">
    <location>
        <position position="28"/>
    </location>
    <ligand>
        <name>substrate</name>
    </ligand>
</feature>
<feature type="binding site" evidence="1">
    <location>
        <position position="98"/>
    </location>
    <ligand>
        <name>substrate</name>
    </ligand>
</feature>
<feature type="binding site" evidence="1">
    <location>
        <begin position="120"/>
        <end position="122"/>
    </location>
    <ligand>
        <name>substrate</name>
    </ligand>
</feature>
<proteinExistence type="inferred from homology"/>
<accession>B7JQF1</accession>
<sequence>MKKHGVLNSEIAAVLASLGHTDTIVIADCGLPIPDGVKRIDLAVEIGKPSFLDVLQVVADDMAIEKVTLAEEVINNNAEVNKEIELKLIEPAFEYVCHEQFKEHTKKAKAIIRTGEATPYANVILHAGVIF</sequence>
<keyword id="KW-0119">Carbohydrate metabolism</keyword>
<keyword id="KW-0963">Cytoplasm</keyword>
<keyword id="KW-0413">Isomerase</keyword>
<protein>
    <recommendedName>
        <fullName evidence="1">D-ribose pyranase</fullName>
        <ecNumber evidence="1">5.4.99.62</ecNumber>
    </recommendedName>
</protein>
<organism>
    <name type="scientific">Bacillus cereus (strain AH820)</name>
    <dbReference type="NCBI Taxonomy" id="405535"/>
    <lineage>
        <taxon>Bacteria</taxon>
        <taxon>Bacillati</taxon>
        <taxon>Bacillota</taxon>
        <taxon>Bacilli</taxon>
        <taxon>Bacillales</taxon>
        <taxon>Bacillaceae</taxon>
        <taxon>Bacillus</taxon>
        <taxon>Bacillus cereus group</taxon>
    </lineage>
</organism>
<dbReference type="EC" id="5.4.99.62" evidence="1"/>
<dbReference type="EMBL" id="CP001283">
    <property type="protein sequence ID" value="ACK92125.1"/>
    <property type="molecule type" value="Genomic_DNA"/>
</dbReference>
<dbReference type="RefSeq" id="WP_000716140.1">
    <property type="nucleotide sequence ID" value="NC_011773.1"/>
</dbReference>
<dbReference type="SMR" id="B7JQF1"/>
<dbReference type="GeneID" id="45020726"/>
<dbReference type="KEGG" id="bcu:BCAH820_0723"/>
<dbReference type="HOGENOM" id="CLU_135498_0_0_9"/>
<dbReference type="UniPathway" id="UPA00916">
    <property type="reaction ID" value="UER00888"/>
</dbReference>
<dbReference type="Proteomes" id="UP000001363">
    <property type="component" value="Chromosome"/>
</dbReference>
<dbReference type="GO" id="GO:0005829">
    <property type="term" value="C:cytosol"/>
    <property type="evidence" value="ECO:0007669"/>
    <property type="project" value="TreeGrafter"/>
</dbReference>
<dbReference type="GO" id="GO:0062193">
    <property type="term" value="F:D-ribose pyranase activity"/>
    <property type="evidence" value="ECO:0007669"/>
    <property type="project" value="UniProtKB-EC"/>
</dbReference>
<dbReference type="GO" id="GO:0016872">
    <property type="term" value="F:intramolecular lyase activity"/>
    <property type="evidence" value="ECO:0007669"/>
    <property type="project" value="UniProtKB-UniRule"/>
</dbReference>
<dbReference type="GO" id="GO:0048029">
    <property type="term" value="F:monosaccharide binding"/>
    <property type="evidence" value="ECO:0007669"/>
    <property type="project" value="InterPro"/>
</dbReference>
<dbReference type="GO" id="GO:0019303">
    <property type="term" value="P:D-ribose catabolic process"/>
    <property type="evidence" value="ECO:0007669"/>
    <property type="project" value="UniProtKB-UniRule"/>
</dbReference>
<dbReference type="FunFam" id="3.40.1650.10:FF:000003">
    <property type="entry name" value="D-ribose pyranase"/>
    <property type="match status" value="1"/>
</dbReference>
<dbReference type="Gene3D" id="3.40.1650.10">
    <property type="entry name" value="RbsD-like domain"/>
    <property type="match status" value="1"/>
</dbReference>
<dbReference type="HAMAP" id="MF_01661">
    <property type="entry name" value="D_rib_pyranase"/>
    <property type="match status" value="1"/>
</dbReference>
<dbReference type="InterPro" id="IPR023064">
    <property type="entry name" value="D-ribose_pyranase"/>
</dbReference>
<dbReference type="InterPro" id="IPR023750">
    <property type="entry name" value="RbsD-like_sf"/>
</dbReference>
<dbReference type="InterPro" id="IPR007721">
    <property type="entry name" value="RbsD_FucU"/>
</dbReference>
<dbReference type="NCBIfam" id="NF008761">
    <property type="entry name" value="PRK11797.1"/>
    <property type="match status" value="1"/>
</dbReference>
<dbReference type="PANTHER" id="PTHR37831">
    <property type="entry name" value="D-RIBOSE PYRANASE"/>
    <property type="match status" value="1"/>
</dbReference>
<dbReference type="PANTHER" id="PTHR37831:SF1">
    <property type="entry name" value="D-RIBOSE PYRANASE"/>
    <property type="match status" value="1"/>
</dbReference>
<dbReference type="Pfam" id="PF05025">
    <property type="entry name" value="RbsD_FucU"/>
    <property type="match status" value="1"/>
</dbReference>
<dbReference type="SUPFAM" id="SSF102546">
    <property type="entry name" value="RbsD-like"/>
    <property type="match status" value="1"/>
</dbReference>
<reference key="1">
    <citation type="submission" date="2008-10" db="EMBL/GenBank/DDBJ databases">
        <title>Genome sequence of Bacillus cereus AH820.</title>
        <authorList>
            <person name="Dodson R.J."/>
            <person name="Durkin A.S."/>
            <person name="Rosovitz M.J."/>
            <person name="Rasko D.A."/>
            <person name="Hoffmaster A."/>
            <person name="Ravel J."/>
            <person name="Sutton G."/>
        </authorList>
    </citation>
    <scope>NUCLEOTIDE SEQUENCE [LARGE SCALE GENOMIC DNA]</scope>
    <source>
        <strain>AH820</strain>
    </source>
</reference>